<comment type="similarity">
    <text evidence="1">Belongs to the UPF0253 family.</text>
</comment>
<accession>Q1CFG8</accession>
<accession>C4GWW1</accession>
<proteinExistence type="inferred from homology"/>
<gene>
    <name type="ordered locus">YPN_2935</name>
    <name type="ORF">YP516_3325</name>
</gene>
<feature type="chain" id="PRO_0000277529" description="UPF0253 protein YPN_2935">
    <location>
        <begin position="1"/>
        <end position="66"/>
    </location>
</feature>
<evidence type="ECO:0000255" key="1">
    <source>
        <dbReference type="HAMAP-Rule" id="MF_01064"/>
    </source>
</evidence>
<protein>
    <recommendedName>
        <fullName evidence="1">UPF0253 protein YPN_2935</fullName>
    </recommendedName>
</protein>
<organism>
    <name type="scientific">Yersinia pestis bv. Antiqua (strain Nepal516)</name>
    <dbReference type="NCBI Taxonomy" id="377628"/>
    <lineage>
        <taxon>Bacteria</taxon>
        <taxon>Pseudomonadati</taxon>
        <taxon>Pseudomonadota</taxon>
        <taxon>Gammaproteobacteria</taxon>
        <taxon>Enterobacterales</taxon>
        <taxon>Yersiniaceae</taxon>
        <taxon>Yersinia</taxon>
    </lineage>
</organism>
<name>Y2935_YERPN</name>
<sequence length="66" mass="7228">MQQYCELVRRFYAEIGSGDLGYVPDALRCVLKALDEVAANDALPSSVREQAAYAAANLLVSDYVDE</sequence>
<reference key="1">
    <citation type="journal article" date="2006" name="J. Bacteriol.">
        <title>Complete genome sequence of Yersinia pestis strains Antiqua and Nepal516: evidence of gene reduction in an emerging pathogen.</title>
        <authorList>
            <person name="Chain P.S.G."/>
            <person name="Hu P."/>
            <person name="Malfatti S.A."/>
            <person name="Radnedge L."/>
            <person name="Larimer F."/>
            <person name="Vergez L.M."/>
            <person name="Worsham P."/>
            <person name="Chu M.C."/>
            <person name="Andersen G.L."/>
        </authorList>
    </citation>
    <scope>NUCLEOTIDE SEQUENCE [LARGE SCALE GENOMIC DNA]</scope>
    <source>
        <strain>Nepal516</strain>
    </source>
</reference>
<reference key="2">
    <citation type="submission" date="2009-04" db="EMBL/GenBank/DDBJ databases">
        <title>Yersinia pestis Nepal516A whole genome shotgun sequencing project.</title>
        <authorList>
            <person name="Plunkett G. III"/>
            <person name="Anderson B.D."/>
            <person name="Baumler D.J."/>
            <person name="Burland V."/>
            <person name="Cabot E.L."/>
            <person name="Glasner J.D."/>
            <person name="Mau B."/>
            <person name="Neeno-Eckwall E."/>
            <person name="Perna N.T."/>
            <person name="Munk A.C."/>
            <person name="Tapia R."/>
            <person name="Green L.D."/>
            <person name="Rogers Y.C."/>
            <person name="Detter J.C."/>
            <person name="Bruce D.C."/>
            <person name="Brettin T.S."/>
        </authorList>
    </citation>
    <scope>NUCLEOTIDE SEQUENCE [LARGE SCALE GENOMIC DNA]</scope>
    <source>
        <strain>Nepal516</strain>
    </source>
</reference>
<dbReference type="EMBL" id="CP000305">
    <property type="protein sequence ID" value="ABG19262.1"/>
    <property type="molecule type" value="Genomic_DNA"/>
</dbReference>
<dbReference type="EMBL" id="ACNQ01000017">
    <property type="protein sequence ID" value="EEO75411.1"/>
    <property type="molecule type" value="Genomic_DNA"/>
</dbReference>
<dbReference type="RefSeq" id="WP_002212152.1">
    <property type="nucleotide sequence ID" value="NZ_ACNQ01000017.1"/>
</dbReference>
<dbReference type="SMR" id="Q1CFG8"/>
<dbReference type="KEGG" id="ypn:YPN_2935"/>
<dbReference type="HOGENOM" id="CLU_190008_0_0_6"/>
<dbReference type="Proteomes" id="UP000008936">
    <property type="component" value="Chromosome"/>
</dbReference>
<dbReference type="HAMAP" id="MF_01064">
    <property type="entry name" value="UPF0253"/>
    <property type="match status" value="1"/>
</dbReference>
<dbReference type="InterPro" id="IPR009624">
    <property type="entry name" value="UPF0253"/>
</dbReference>
<dbReference type="NCBIfam" id="NF003436">
    <property type="entry name" value="PRK04964.1"/>
    <property type="match status" value="1"/>
</dbReference>
<dbReference type="Pfam" id="PF06786">
    <property type="entry name" value="UPF0253"/>
    <property type="match status" value="1"/>
</dbReference>